<gene>
    <name type="primary">UEL-1</name>
    <name evidence="4" type="ordered locus">Os07g0139400</name>
    <name evidence="3" type="ordered locus">LOC_Os07g04690</name>
    <name type="ORF">OJ1417_E01.121</name>
    <name evidence="5" type="ORF">OsJ_23039</name>
    <name type="ORF">P0495H05.61</name>
</gene>
<sequence length="421" mass="46773">MLPTNRNRPQQRPARSWYFISDMDFSDPKRKPRYLSKILMVALLTAMCVVMLTQPPCHRRTPSVFSIHEPGVTHVLVTGGAGYIGSHAALRLLKDSFRVTIVDNLSRGNMGAIKVLQNLFSEPGRLQFIYADLGDPKAVNRIFAENAFDAVMHFAAVAYVGESTLEPLRYYHNITSNTLVVLEAMAAHNVRTLIYSSTCATYGEPEKMPITEGTPQFPINPYGKAKKMAEDIILDFSKSKKADMAVMILRYFNVIGSDPEGRLGEAPKPELREHGRISGACFDAALGIIPGLKVKGTDYETPDGTCVRDYIDVTDLVDAHVKALNKAERGKVGIYNVGTGKGRSVKEFVEACKKATGVDIKVDYFPRRPGDYAEVYSDPAKINSELNWTAQHTDLLESLRVAWTWQKKHRSGYGPPQAMVL</sequence>
<accession>Q8H930</accession>
<accession>A0A0P0X238</accession>
<accession>Q0D8Q0</accession>
<accession>Q8GVZ4</accession>
<protein>
    <recommendedName>
        <fullName>Probable UDP-arabinose 4-epimerase 1</fullName>
        <ecNumber>5.1.3.5</ecNumber>
    </recommendedName>
    <alternativeName>
        <fullName>OsUEL-1</fullName>
    </alternativeName>
    <alternativeName>
        <fullName>UDP-D-xylose 4-epimerase 1</fullName>
    </alternativeName>
    <alternativeName>
        <fullName>UDP-galactose 4-epimerase-like protein 1</fullName>
    </alternativeName>
</protein>
<organism>
    <name type="scientific">Oryza sativa subsp. japonica</name>
    <name type="common">Rice</name>
    <dbReference type="NCBI Taxonomy" id="39947"/>
    <lineage>
        <taxon>Eukaryota</taxon>
        <taxon>Viridiplantae</taxon>
        <taxon>Streptophyta</taxon>
        <taxon>Embryophyta</taxon>
        <taxon>Tracheophyta</taxon>
        <taxon>Spermatophyta</taxon>
        <taxon>Magnoliopsida</taxon>
        <taxon>Liliopsida</taxon>
        <taxon>Poales</taxon>
        <taxon>Poaceae</taxon>
        <taxon>BOP clade</taxon>
        <taxon>Oryzoideae</taxon>
        <taxon>Oryzeae</taxon>
        <taxon>Oryzinae</taxon>
        <taxon>Oryza</taxon>
        <taxon>Oryza sativa</taxon>
    </lineage>
</organism>
<proteinExistence type="evidence at transcript level"/>
<dbReference type="EC" id="5.1.3.5"/>
<dbReference type="EMBL" id="AB096864">
    <property type="protein sequence ID" value="BAC24804.1"/>
    <property type="molecule type" value="mRNA"/>
</dbReference>
<dbReference type="EMBL" id="AP003829">
    <property type="protein sequence ID" value="BAC45055.1"/>
    <property type="status" value="ALT_SEQ"/>
    <property type="molecule type" value="Genomic_DNA"/>
</dbReference>
<dbReference type="EMBL" id="AP004314">
    <property type="protein sequence ID" value="BAC83501.1"/>
    <property type="status" value="ALT_SEQ"/>
    <property type="molecule type" value="Genomic_DNA"/>
</dbReference>
<dbReference type="EMBL" id="AP008213">
    <property type="protein sequence ID" value="BAF20773.1"/>
    <property type="molecule type" value="Genomic_DNA"/>
</dbReference>
<dbReference type="EMBL" id="AP014963">
    <property type="protein sequence ID" value="BAS99996.1"/>
    <property type="molecule type" value="Genomic_DNA"/>
</dbReference>
<dbReference type="EMBL" id="CM000144">
    <property type="protein sequence ID" value="EEE66539.1"/>
    <property type="molecule type" value="Genomic_DNA"/>
</dbReference>
<dbReference type="RefSeq" id="XP_015647690.1">
    <property type="nucleotide sequence ID" value="XM_015792204.1"/>
</dbReference>
<dbReference type="SMR" id="Q8H930"/>
<dbReference type="FunCoup" id="Q8H930">
    <property type="interactions" value="151"/>
</dbReference>
<dbReference type="STRING" id="39947.Q8H930"/>
<dbReference type="PaxDb" id="39947-Q8H930"/>
<dbReference type="EnsemblPlants" id="Os07t0139400-01">
    <property type="protein sequence ID" value="Os07t0139400-01"/>
    <property type="gene ID" value="Os07g0139400"/>
</dbReference>
<dbReference type="EnsemblPlants" id="Os07t0139400-02">
    <property type="protein sequence ID" value="Os07t0139400-02"/>
    <property type="gene ID" value="Os07g0139400"/>
</dbReference>
<dbReference type="Gramene" id="Os07t0139400-01">
    <property type="protein sequence ID" value="Os07t0139400-01"/>
    <property type="gene ID" value="Os07g0139400"/>
</dbReference>
<dbReference type="Gramene" id="Os07t0139400-02">
    <property type="protein sequence ID" value="Os07t0139400-02"/>
    <property type="gene ID" value="Os07g0139400"/>
</dbReference>
<dbReference type="KEGG" id="dosa:Os07g0139400"/>
<dbReference type="eggNOG" id="KOG1371">
    <property type="taxonomic scope" value="Eukaryota"/>
</dbReference>
<dbReference type="HOGENOM" id="CLU_007383_1_10_1"/>
<dbReference type="InParanoid" id="Q8H930"/>
<dbReference type="OMA" id="HFAAHTI"/>
<dbReference type="OrthoDB" id="9402762at2759"/>
<dbReference type="PlantReactome" id="R-OSA-1119428">
    <property type="pathway name" value="GDP-D-rhamnose biosynthesis"/>
</dbReference>
<dbReference type="PlantReactome" id="R-OSA-1119574">
    <property type="pathway name" value="UDP-L-arabinose biosynthesis and transport"/>
</dbReference>
<dbReference type="PlantReactome" id="R-OSA-1119620">
    <property type="pathway name" value="GDP-L-fucose biosynthesis I (from GDP-D-mannose)"/>
</dbReference>
<dbReference type="UniPathway" id="UPA00797">
    <property type="reaction ID" value="UER00772"/>
</dbReference>
<dbReference type="UniPathway" id="UPA00963"/>
<dbReference type="Proteomes" id="UP000000763">
    <property type="component" value="Chromosome 7"/>
</dbReference>
<dbReference type="Proteomes" id="UP000007752">
    <property type="component" value="Chromosome 7"/>
</dbReference>
<dbReference type="Proteomes" id="UP000059680">
    <property type="component" value="Chromosome 7"/>
</dbReference>
<dbReference type="ExpressionAtlas" id="Q8H930">
    <property type="expression patterns" value="baseline and differential"/>
</dbReference>
<dbReference type="GO" id="GO:0032580">
    <property type="term" value="C:Golgi cisterna membrane"/>
    <property type="evidence" value="ECO:0007669"/>
    <property type="project" value="UniProtKB-SubCell"/>
</dbReference>
<dbReference type="GO" id="GO:0050373">
    <property type="term" value="F:UDP-arabinose 4-epimerase activity"/>
    <property type="evidence" value="ECO:0007669"/>
    <property type="project" value="UniProtKB-EC"/>
</dbReference>
<dbReference type="GO" id="GO:0003978">
    <property type="term" value="F:UDP-glucose 4-epimerase activity"/>
    <property type="evidence" value="ECO:0007669"/>
    <property type="project" value="InterPro"/>
</dbReference>
<dbReference type="GO" id="GO:0045227">
    <property type="term" value="P:capsule polysaccharide biosynthetic process"/>
    <property type="evidence" value="ECO:0007669"/>
    <property type="project" value="UniProtKB-UniPathway"/>
</dbReference>
<dbReference type="GO" id="GO:0006012">
    <property type="term" value="P:galactose metabolic process"/>
    <property type="evidence" value="ECO:0007669"/>
    <property type="project" value="InterPro"/>
</dbReference>
<dbReference type="GO" id="GO:0033358">
    <property type="term" value="P:UDP-L-arabinose biosynthetic process"/>
    <property type="evidence" value="ECO:0007669"/>
    <property type="project" value="UniProtKB-UniPathway"/>
</dbReference>
<dbReference type="CDD" id="cd05247">
    <property type="entry name" value="UDP_G4E_1_SDR_e"/>
    <property type="match status" value="1"/>
</dbReference>
<dbReference type="Gene3D" id="3.40.50.720">
    <property type="entry name" value="NAD(P)-binding Rossmann-like Domain"/>
    <property type="match status" value="1"/>
</dbReference>
<dbReference type="Gene3D" id="3.90.25.10">
    <property type="entry name" value="UDP-galactose 4-epimerase, domain 1"/>
    <property type="match status" value="1"/>
</dbReference>
<dbReference type="InterPro" id="IPR016040">
    <property type="entry name" value="NAD(P)-bd_dom"/>
</dbReference>
<dbReference type="InterPro" id="IPR036291">
    <property type="entry name" value="NAD(P)-bd_dom_sf"/>
</dbReference>
<dbReference type="InterPro" id="IPR005886">
    <property type="entry name" value="UDP_G4E"/>
</dbReference>
<dbReference type="NCBIfam" id="TIGR01179">
    <property type="entry name" value="galE"/>
    <property type="match status" value="1"/>
</dbReference>
<dbReference type="PANTHER" id="PTHR43725:SF51">
    <property type="entry name" value="UDP-ARABINOSE 4-EPIMERASE 1-RELATED"/>
    <property type="match status" value="1"/>
</dbReference>
<dbReference type="PANTHER" id="PTHR43725">
    <property type="entry name" value="UDP-GLUCOSE 4-EPIMERASE"/>
    <property type="match status" value="1"/>
</dbReference>
<dbReference type="Pfam" id="PF16363">
    <property type="entry name" value="GDP_Man_Dehyd"/>
    <property type="match status" value="1"/>
</dbReference>
<dbReference type="SUPFAM" id="SSF51735">
    <property type="entry name" value="NAD(P)-binding Rossmann-fold domains"/>
    <property type="match status" value="1"/>
</dbReference>
<reference key="1">
    <citation type="submission" date="2002-11" db="EMBL/GenBank/DDBJ databases">
        <title>Cloning of UDP-glucose 4-epimerase-like genes in Oryza sativa.</title>
        <authorList>
            <person name="Suzuki K."/>
            <person name="Kitamura S."/>
        </authorList>
    </citation>
    <scope>NUCLEOTIDE SEQUENCE [MRNA]</scope>
    <source>
        <strain>cv. Nipponbare</strain>
        <tissue>Immature seed</tissue>
    </source>
</reference>
<reference key="2">
    <citation type="journal article" date="2005" name="Nature">
        <title>The map-based sequence of the rice genome.</title>
        <authorList>
            <consortium name="International rice genome sequencing project (IRGSP)"/>
        </authorList>
    </citation>
    <scope>NUCLEOTIDE SEQUENCE [LARGE SCALE GENOMIC DNA]</scope>
    <source>
        <strain>cv. Nipponbare</strain>
    </source>
</reference>
<reference key="3">
    <citation type="journal article" date="2008" name="Nucleic Acids Res.">
        <title>The rice annotation project database (RAP-DB): 2008 update.</title>
        <authorList>
            <consortium name="The rice annotation project (RAP)"/>
        </authorList>
    </citation>
    <scope>GENOME REANNOTATION</scope>
    <source>
        <strain>cv. Nipponbare</strain>
    </source>
</reference>
<reference key="4">
    <citation type="journal article" date="2013" name="Rice">
        <title>Improvement of the Oryza sativa Nipponbare reference genome using next generation sequence and optical map data.</title>
        <authorList>
            <person name="Kawahara Y."/>
            <person name="de la Bastide M."/>
            <person name="Hamilton J.P."/>
            <person name="Kanamori H."/>
            <person name="McCombie W.R."/>
            <person name="Ouyang S."/>
            <person name="Schwartz D.C."/>
            <person name="Tanaka T."/>
            <person name="Wu J."/>
            <person name="Zhou S."/>
            <person name="Childs K.L."/>
            <person name="Davidson R.M."/>
            <person name="Lin H."/>
            <person name="Quesada-Ocampo L."/>
            <person name="Vaillancourt B."/>
            <person name="Sakai H."/>
            <person name="Lee S.S."/>
            <person name="Kim J."/>
            <person name="Numa H."/>
            <person name="Itoh T."/>
            <person name="Buell C.R."/>
            <person name="Matsumoto T."/>
        </authorList>
    </citation>
    <scope>GENOME REANNOTATION</scope>
    <source>
        <strain>cv. Nipponbare</strain>
    </source>
</reference>
<reference key="5">
    <citation type="journal article" date="2005" name="PLoS Biol.">
        <title>The genomes of Oryza sativa: a history of duplications.</title>
        <authorList>
            <person name="Yu J."/>
            <person name="Wang J."/>
            <person name="Lin W."/>
            <person name="Li S."/>
            <person name="Li H."/>
            <person name="Zhou J."/>
            <person name="Ni P."/>
            <person name="Dong W."/>
            <person name="Hu S."/>
            <person name="Zeng C."/>
            <person name="Zhang J."/>
            <person name="Zhang Y."/>
            <person name="Li R."/>
            <person name="Xu Z."/>
            <person name="Li S."/>
            <person name="Li X."/>
            <person name="Zheng H."/>
            <person name="Cong L."/>
            <person name="Lin L."/>
            <person name="Yin J."/>
            <person name="Geng J."/>
            <person name="Li G."/>
            <person name="Shi J."/>
            <person name="Liu J."/>
            <person name="Lv H."/>
            <person name="Li J."/>
            <person name="Wang J."/>
            <person name="Deng Y."/>
            <person name="Ran L."/>
            <person name="Shi X."/>
            <person name="Wang X."/>
            <person name="Wu Q."/>
            <person name="Li C."/>
            <person name="Ren X."/>
            <person name="Wang J."/>
            <person name="Wang X."/>
            <person name="Li D."/>
            <person name="Liu D."/>
            <person name="Zhang X."/>
            <person name="Ji Z."/>
            <person name="Zhao W."/>
            <person name="Sun Y."/>
            <person name="Zhang Z."/>
            <person name="Bao J."/>
            <person name="Han Y."/>
            <person name="Dong L."/>
            <person name="Ji J."/>
            <person name="Chen P."/>
            <person name="Wu S."/>
            <person name="Liu J."/>
            <person name="Xiao Y."/>
            <person name="Bu D."/>
            <person name="Tan J."/>
            <person name="Yang L."/>
            <person name="Ye C."/>
            <person name="Zhang J."/>
            <person name="Xu J."/>
            <person name="Zhou Y."/>
            <person name="Yu Y."/>
            <person name="Zhang B."/>
            <person name="Zhuang S."/>
            <person name="Wei H."/>
            <person name="Liu B."/>
            <person name="Lei M."/>
            <person name="Yu H."/>
            <person name="Li Y."/>
            <person name="Xu H."/>
            <person name="Wei S."/>
            <person name="He X."/>
            <person name="Fang L."/>
            <person name="Zhang Z."/>
            <person name="Zhang Y."/>
            <person name="Huang X."/>
            <person name="Su Z."/>
            <person name="Tong W."/>
            <person name="Li J."/>
            <person name="Tong Z."/>
            <person name="Li S."/>
            <person name="Ye J."/>
            <person name="Wang L."/>
            <person name="Fang L."/>
            <person name="Lei T."/>
            <person name="Chen C.-S."/>
            <person name="Chen H.-C."/>
            <person name="Xu Z."/>
            <person name="Li H."/>
            <person name="Huang H."/>
            <person name="Zhang F."/>
            <person name="Xu H."/>
            <person name="Li N."/>
            <person name="Zhao C."/>
            <person name="Li S."/>
            <person name="Dong L."/>
            <person name="Huang Y."/>
            <person name="Li L."/>
            <person name="Xi Y."/>
            <person name="Qi Q."/>
            <person name="Li W."/>
            <person name="Zhang B."/>
            <person name="Hu W."/>
            <person name="Zhang Y."/>
            <person name="Tian X."/>
            <person name="Jiao Y."/>
            <person name="Liang X."/>
            <person name="Jin J."/>
            <person name="Gao L."/>
            <person name="Zheng W."/>
            <person name="Hao B."/>
            <person name="Liu S.-M."/>
            <person name="Wang W."/>
            <person name="Yuan L."/>
            <person name="Cao M."/>
            <person name="McDermott J."/>
            <person name="Samudrala R."/>
            <person name="Wang J."/>
            <person name="Wong G.K.-S."/>
            <person name="Yang H."/>
        </authorList>
    </citation>
    <scope>NUCLEOTIDE SEQUENCE [LARGE SCALE GENOMIC DNA]</scope>
    <source>
        <strain>cv. Nipponbare</strain>
    </source>
</reference>
<keyword id="KW-0119">Carbohydrate metabolism</keyword>
<keyword id="KW-0333">Golgi apparatus</keyword>
<keyword id="KW-0413">Isomerase</keyword>
<keyword id="KW-0472">Membrane</keyword>
<keyword id="KW-0520">NAD</keyword>
<keyword id="KW-1185">Reference proteome</keyword>
<keyword id="KW-0735">Signal-anchor</keyword>
<keyword id="KW-0812">Transmembrane</keyword>
<keyword id="KW-1133">Transmembrane helix</keyword>
<evidence type="ECO:0000250" key="1"/>
<evidence type="ECO:0000255" key="2"/>
<evidence type="ECO:0000305" key="3"/>
<evidence type="ECO:0000312" key="4">
    <source>
        <dbReference type="EMBL" id="BAF20773.1"/>
    </source>
</evidence>
<evidence type="ECO:0000312" key="5">
    <source>
        <dbReference type="EMBL" id="EEE66539.1"/>
    </source>
</evidence>
<comment type="catalytic activity">
    <reaction>
        <text>UDP-beta-L-arabinopyranose = UDP-alpha-D-xylose</text>
        <dbReference type="Rhea" id="RHEA:11320"/>
        <dbReference type="ChEBI" id="CHEBI:57632"/>
        <dbReference type="ChEBI" id="CHEBI:61457"/>
        <dbReference type="EC" id="5.1.3.5"/>
    </reaction>
</comment>
<comment type="cofactor">
    <cofactor evidence="1">
        <name>NAD(+)</name>
        <dbReference type="ChEBI" id="CHEBI:57540"/>
    </cofactor>
</comment>
<comment type="pathway">
    <text>Nucleotide-sugar biosynthesis; UDP-L-arabinose biosynthesis; UDP-L-arabinose from UDP-alpha-D-xylose: step 1/1.</text>
</comment>
<comment type="pathway">
    <text>Cell wall biogenesis; cell wall polysaccharide biosynthesis.</text>
</comment>
<comment type="subcellular location">
    <subcellularLocation>
        <location evidence="3">Golgi apparatus</location>
        <location evidence="3">Golgi stack membrane</location>
        <topology evidence="3">Single-pass type II membrane protein</topology>
    </subcellularLocation>
</comment>
<comment type="similarity">
    <text evidence="3">Belongs to the NAD(P)-dependent epimerase/dehydratase family.</text>
</comment>
<comment type="sequence caution" evidence="3">
    <conflict type="erroneous gene model prediction">
        <sequence resource="EMBL-CDS" id="BAC45055"/>
    </conflict>
</comment>
<comment type="sequence caution" evidence="3">
    <conflict type="erroneous gene model prediction">
        <sequence resource="EMBL-CDS" id="BAC83501"/>
    </conflict>
</comment>
<name>ARAE1_ORYSJ</name>
<feature type="chain" id="PRO_0000183233" description="Probable UDP-arabinose 4-epimerase 1">
    <location>
        <begin position="1"/>
        <end position="421"/>
    </location>
</feature>
<feature type="topological domain" description="Cytoplasmic" evidence="2">
    <location>
        <begin position="1"/>
        <end position="33"/>
    </location>
</feature>
<feature type="transmembrane region" description="Helical; Signal-anchor for type II membrane protein" evidence="2">
    <location>
        <begin position="34"/>
        <end position="53"/>
    </location>
</feature>
<feature type="topological domain" description="Lumenal" evidence="2">
    <location>
        <begin position="54"/>
        <end position="421"/>
    </location>
</feature>
<feature type="active site" description="Proton acceptor" evidence="1">
    <location>
        <position position="222"/>
    </location>
</feature>
<feature type="binding site" evidence="1">
    <location>
        <begin position="74"/>
        <end position="105"/>
    </location>
    <ligand>
        <name>NAD(+)</name>
        <dbReference type="ChEBI" id="CHEBI:57540"/>
    </ligand>
</feature>
<feature type="sequence conflict" description="In Ref. 1; BAC24804." evidence="3" ref="1">
    <original>N</original>
    <variation>S</variation>
    <location>
        <position position="220"/>
    </location>
</feature>